<name>ATPA_MYCGA</name>
<accession>P33252</accession>
<keyword id="KW-0066">ATP synthesis</keyword>
<keyword id="KW-0067">ATP-binding</keyword>
<keyword id="KW-1003">Cell membrane</keyword>
<keyword id="KW-0139">CF(1)</keyword>
<keyword id="KW-0375">Hydrogen ion transport</keyword>
<keyword id="KW-0406">Ion transport</keyword>
<keyword id="KW-0472">Membrane</keyword>
<keyword id="KW-0547">Nucleotide-binding</keyword>
<keyword id="KW-1185">Reference proteome</keyword>
<keyword id="KW-1278">Translocase</keyword>
<keyword id="KW-0813">Transport</keyword>
<feature type="chain" id="PRO_0000144334" description="ATP synthase subunit alpha">
    <location>
        <begin position="1"/>
        <end position="518"/>
    </location>
</feature>
<feature type="binding site" evidence="1">
    <location>
        <begin position="170"/>
        <end position="177"/>
    </location>
    <ligand>
        <name>ATP</name>
        <dbReference type="ChEBI" id="CHEBI:30616"/>
    </ligand>
</feature>
<feature type="site" description="Required for activity" evidence="1">
    <location>
        <position position="363"/>
    </location>
</feature>
<feature type="sequence conflict" description="In Ref. 1; CAA45549." evidence="2" ref="1">
    <original>Q</original>
    <variation>P</variation>
    <location>
        <position position="469"/>
    </location>
</feature>
<organism>
    <name type="scientific">Mycoplasmoides gallisepticum (strain R(low / passage 15 / clone 2))</name>
    <name type="common">Mycoplasma gallisepticum</name>
    <dbReference type="NCBI Taxonomy" id="710127"/>
    <lineage>
        <taxon>Bacteria</taxon>
        <taxon>Bacillati</taxon>
        <taxon>Mycoplasmatota</taxon>
        <taxon>Mycoplasmoidales</taxon>
        <taxon>Mycoplasmoidaceae</taxon>
        <taxon>Mycoplasmoides</taxon>
    </lineage>
</organism>
<proteinExistence type="inferred from homology"/>
<reference key="1">
    <citation type="journal article" date="1992" name="Biochem. J.">
        <title>Nucleotide sequence, organization and characterization of the atp genes and the encoded subunits of Mycoplasma gallisepticum ATPase.</title>
        <authorList>
            <person name="Rasmussen O.F."/>
            <person name="Shirvan M.H."/>
            <person name="Margalit H."/>
            <person name="Christiansen C."/>
            <person name="Rottem S."/>
        </authorList>
    </citation>
    <scope>NUCLEOTIDE SEQUENCE [GENOMIC DNA]</scope>
    <source>
        <strain>A5969Var.B</strain>
    </source>
</reference>
<reference key="2">
    <citation type="journal article" date="2003" name="Microbiology">
        <title>The complete genome sequence of the avian pathogen Mycoplasma gallisepticum strain R(low).</title>
        <authorList>
            <person name="Papazisi L."/>
            <person name="Gorton T.S."/>
            <person name="Kutish G."/>
            <person name="Markham P.F."/>
            <person name="Browning G.F."/>
            <person name="Nguyen D.K."/>
            <person name="Swartzell S."/>
            <person name="Madan A."/>
            <person name="Mahairas G."/>
            <person name="Geary S.J."/>
        </authorList>
    </citation>
    <scope>NUCLEOTIDE SEQUENCE [LARGE SCALE GENOMIC DNA]</scope>
    <source>
        <strain>R(low / passage 15 / clone 2)</strain>
    </source>
</reference>
<dbReference type="EC" id="7.1.2.2" evidence="1"/>
<dbReference type="EMBL" id="X64256">
    <property type="protein sequence ID" value="CAA45549.1"/>
    <property type="molecule type" value="Genomic_DNA"/>
</dbReference>
<dbReference type="EMBL" id="AE015450">
    <property type="protein sequence ID" value="AAP56654.1"/>
    <property type="molecule type" value="Genomic_DNA"/>
</dbReference>
<dbReference type="PIR" id="S24337">
    <property type="entry name" value="S24337"/>
</dbReference>
<dbReference type="RefSeq" id="WP_011113545.1">
    <property type="nucleotide sequence ID" value="NC_004829.2"/>
</dbReference>
<dbReference type="SMR" id="P33252"/>
<dbReference type="GeneID" id="93510132"/>
<dbReference type="KEGG" id="mga:MGA_1172"/>
<dbReference type="HOGENOM" id="CLU_010091_2_1_14"/>
<dbReference type="OrthoDB" id="9803053at2"/>
<dbReference type="Proteomes" id="UP000001418">
    <property type="component" value="Chromosome"/>
</dbReference>
<dbReference type="GO" id="GO:0005886">
    <property type="term" value="C:plasma membrane"/>
    <property type="evidence" value="ECO:0007669"/>
    <property type="project" value="UniProtKB-SubCell"/>
</dbReference>
<dbReference type="GO" id="GO:0045259">
    <property type="term" value="C:proton-transporting ATP synthase complex"/>
    <property type="evidence" value="ECO:0007669"/>
    <property type="project" value="UniProtKB-KW"/>
</dbReference>
<dbReference type="GO" id="GO:0043531">
    <property type="term" value="F:ADP binding"/>
    <property type="evidence" value="ECO:0007669"/>
    <property type="project" value="TreeGrafter"/>
</dbReference>
<dbReference type="GO" id="GO:0005524">
    <property type="term" value="F:ATP binding"/>
    <property type="evidence" value="ECO:0007669"/>
    <property type="project" value="UniProtKB-UniRule"/>
</dbReference>
<dbReference type="GO" id="GO:0046933">
    <property type="term" value="F:proton-transporting ATP synthase activity, rotational mechanism"/>
    <property type="evidence" value="ECO:0007669"/>
    <property type="project" value="UniProtKB-UniRule"/>
</dbReference>
<dbReference type="CDD" id="cd18113">
    <property type="entry name" value="ATP-synt_F1_alpha_C"/>
    <property type="match status" value="1"/>
</dbReference>
<dbReference type="CDD" id="cd18116">
    <property type="entry name" value="ATP-synt_F1_alpha_N"/>
    <property type="match status" value="1"/>
</dbReference>
<dbReference type="CDD" id="cd01132">
    <property type="entry name" value="F1-ATPase_alpha_CD"/>
    <property type="match status" value="1"/>
</dbReference>
<dbReference type="FunFam" id="3.40.50.300:FF:000002">
    <property type="entry name" value="ATP synthase subunit alpha"/>
    <property type="match status" value="1"/>
</dbReference>
<dbReference type="Gene3D" id="2.40.30.20">
    <property type="match status" value="1"/>
</dbReference>
<dbReference type="Gene3D" id="1.20.150.20">
    <property type="entry name" value="ATP synthase alpha/beta chain, C-terminal domain"/>
    <property type="match status" value="1"/>
</dbReference>
<dbReference type="Gene3D" id="3.40.50.300">
    <property type="entry name" value="P-loop containing nucleotide triphosphate hydrolases"/>
    <property type="match status" value="1"/>
</dbReference>
<dbReference type="HAMAP" id="MF_01346">
    <property type="entry name" value="ATP_synth_alpha_bact"/>
    <property type="match status" value="1"/>
</dbReference>
<dbReference type="InterPro" id="IPR023366">
    <property type="entry name" value="ATP_synth_asu-like_sf"/>
</dbReference>
<dbReference type="InterPro" id="IPR000793">
    <property type="entry name" value="ATP_synth_asu_C"/>
</dbReference>
<dbReference type="InterPro" id="IPR038376">
    <property type="entry name" value="ATP_synth_asu_C_sf"/>
</dbReference>
<dbReference type="InterPro" id="IPR033732">
    <property type="entry name" value="ATP_synth_F1_a_nt-bd_dom"/>
</dbReference>
<dbReference type="InterPro" id="IPR005294">
    <property type="entry name" value="ATP_synth_F1_asu"/>
</dbReference>
<dbReference type="InterPro" id="IPR020003">
    <property type="entry name" value="ATPase_a/bsu_AS"/>
</dbReference>
<dbReference type="InterPro" id="IPR004100">
    <property type="entry name" value="ATPase_F1/V1/A1_a/bsu_N"/>
</dbReference>
<dbReference type="InterPro" id="IPR036121">
    <property type="entry name" value="ATPase_F1/V1/A1_a/bsu_N_sf"/>
</dbReference>
<dbReference type="InterPro" id="IPR000194">
    <property type="entry name" value="ATPase_F1/V1/A1_a/bsu_nucl-bd"/>
</dbReference>
<dbReference type="InterPro" id="IPR027417">
    <property type="entry name" value="P-loop_NTPase"/>
</dbReference>
<dbReference type="NCBIfam" id="TIGR00962">
    <property type="entry name" value="atpA"/>
    <property type="match status" value="1"/>
</dbReference>
<dbReference type="NCBIfam" id="NF009884">
    <property type="entry name" value="PRK13343.1"/>
    <property type="match status" value="1"/>
</dbReference>
<dbReference type="PANTHER" id="PTHR48082">
    <property type="entry name" value="ATP SYNTHASE SUBUNIT ALPHA, MITOCHONDRIAL"/>
    <property type="match status" value="1"/>
</dbReference>
<dbReference type="PANTHER" id="PTHR48082:SF2">
    <property type="entry name" value="ATP SYNTHASE SUBUNIT ALPHA, MITOCHONDRIAL"/>
    <property type="match status" value="1"/>
</dbReference>
<dbReference type="Pfam" id="PF00006">
    <property type="entry name" value="ATP-synt_ab"/>
    <property type="match status" value="1"/>
</dbReference>
<dbReference type="Pfam" id="PF00306">
    <property type="entry name" value="ATP-synt_ab_C"/>
    <property type="match status" value="1"/>
</dbReference>
<dbReference type="Pfam" id="PF02874">
    <property type="entry name" value="ATP-synt_ab_N"/>
    <property type="match status" value="1"/>
</dbReference>
<dbReference type="SUPFAM" id="SSF47917">
    <property type="entry name" value="C-terminal domain of alpha and beta subunits of F1 ATP synthase"/>
    <property type="match status" value="1"/>
</dbReference>
<dbReference type="SUPFAM" id="SSF50615">
    <property type="entry name" value="N-terminal domain of alpha and beta subunits of F1 ATP synthase"/>
    <property type="match status" value="1"/>
</dbReference>
<dbReference type="SUPFAM" id="SSF52540">
    <property type="entry name" value="P-loop containing nucleoside triphosphate hydrolases"/>
    <property type="match status" value="1"/>
</dbReference>
<dbReference type="PROSITE" id="PS00152">
    <property type="entry name" value="ATPASE_ALPHA_BETA"/>
    <property type="match status" value="1"/>
</dbReference>
<comment type="function">
    <text>Produces ATP from ADP in the presence of a proton gradient across the membrane. The alpha chain is a regulatory subunit.</text>
</comment>
<comment type="catalytic activity">
    <reaction evidence="1">
        <text>ATP + H2O + 4 H(+)(in) = ADP + phosphate + 5 H(+)(out)</text>
        <dbReference type="Rhea" id="RHEA:57720"/>
        <dbReference type="ChEBI" id="CHEBI:15377"/>
        <dbReference type="ChEBI" id="CHEBI:15378"/>
        <dbReference type="ChEBI" id="CHEBI:30616"/>
        <dbReference type="ChEBI" id="CHEBI:43474"/>
        <dbReference type="ChEBI" id="CHEBI:456216"/>
        <dbReference type="EC" id="7.1.2.2"/>
    </reaction>
</comment>
<comment type="subunit">
    <text evidence="1">F-type ATPases have 2 components, CF(1) - the catalytic core - and CF(0) - the membrane proton channel. CF(1) has five subunits: alpha(3), beta(3), gamma(1), delta(1), epsilon(1). CF(0) has three main subunits: a(1), b(2) and c(9-12). The alpha and beta chains form an alternating ring which encloses part of the gamma chain. CF(1) is attached to CF(0) by a central stalk formed by the gamma and epsilon chains, while a peripheral stalk is formed by the delta and b chains.</text>
</comment>
<comment type="subcellular location">
    <subcellularLocation>
        <location evidence="1">Cell membrane</location>
        <topology evidence="1">Peripheral membrane protein</topology>
    </subcellularLocation>
</comment>
<comment type="similarity">
    <text evidence="1">Belongs to the ATPase alpha/beta chains family.</text>
</comment>
<protein>
    <recommendedName>
        <fullName evidence="1">ATP synthase subunit alpha</fullName>
        <ecNumber evidence="1">7.1.2.2</ecNumber>
    </recommendedName>
    <alternativeName>
        <fullName evidence="1">ATP synthase F1 sector subunit alpha</fullName>
    </alternativeName>
    <alternativeName>
        <fullName evidence="1">F-ATPase subunit alpha</fullName>
    </alternativeName>
</protein>
<sequence>MAINLNEYSLLIKDQIKKYANKIISDQKGYIITIGDGIVRVSGLDDVLLNELVEFENGAYGIALNLEPNSVGVVMLSDYYDLKEGSSVKRTGKVIQAPVGDGLLGRVIDPIGLPIDGKGELKNISGYAPIERLAYGVMQRKSVHQPLETGILAIDSMLPIGKGQRELIIGDRQTGKTTIALDTIINQKGKNVNCIYVAIGQKNSSVAQITRLLEETGAMAYTTIVSATASELAALSYIAPFAGVTIGEEWMRQGKDVLIVYDDLSKHAVAYRALSLLLRRPPGREAYPGDIFYLHSRLLERAGKLSDELGAGSITALPIIETQAGDISAYIPTNVISITDGQLFTTTSLFNSGQRPAIHVGLSVSRVGSAAQLKSIKQVSGSLKLELAQYRELDTFSQFSSDLDAETKIVLEHGARVMEMFKQPQAKPIDQTSEAVLLFGIKNRFIKWIPTDHIIKFKEFILDKIKQDQVYKKIEEKKAFDDEIEKELTAFFKDVVKKYTSTLVDYNGSLYGDLKELE</sequence>
<gene>
    <name evidence="1" type="primary">atpA</name>
    <name type="ordered locus">MYCGA3040</name>
    <name type="ORF">MGA_1172</name>
</gene>
<evidence type="ECO:0000255" key="1">
    <source>
        <dbReference type="HAMAP-Rule" id="MF_01346"/>
    </source>
</evidence>
<evidence type="ECO:0000305" key="2"/>